<gene>
    <name evidence="1" type="primary">gltX</name>
    <name type="ordered locus">PBPRA0874</name>
</gene>
<keyword id="KW-0030">Aminoacyl-tRNA synthetase</keyword>
<keyword id="KW-0067">ATP-binding</keyword>
<keyword id="KW-0963">Cytoplasm</keyword>
<keyword id="KW-0436">Ligase</keyword>
<keyword id="KW-0547">Nucleotide-binding</keyword>
<keyword id="KW-0648">Protein biosynthesis</keyword>
<keyword id="KW-1185">Reference proteome</keyword>
<dbReference type="EC" id="6.1.1.17" evidence="1"/>
<dbReference type="EMBL" id="CR378665">
    <property type="protein sequence ID" value="CAG19287.1"/>
    <property type="molecule type" value="Genomic_DNA"/>
</dbReference>
<dbReference type="RefSeq" id="WP_011217624.1">
    <property type="nucleotide sequence ID" value="NC_006370.1"/>
</dbReference>
<dbReference type="SMR" id="Q6LTT8"/>
<dbReference type="STRING" id="298386.PBPRA0874"/>
<dbReference type="KEGG" id="ppr:PBPRA0874"/>
<dbReference type="eggNOG" id="COG0008">
    <property type="taxonomic scope" value="Bacteria"/>
</dbReference>
<dbReference type="HOGENOM" id="CLU_015768_6_3_6"/>
<dbReference type="Proteomes" id="UP000000593">
    <property type="component" value="Chromosome 1"/>
</dbReference>
<dbReference type="GO" id="GO:0005829">
    <property type="term" value="C:cytosol"/>
    <property type="evidence" value="ECO:0007669"/>
    <property type="project" value="TreeGrafter"/>
</dbReference>
<dbReference type="GO" id="GO:0005524">
    <property type="term" value="F:ATP binding"/>
    <property type="evidence" value="ECO:0007669"/>
    <property type="project" value="UniProtKB-UniRule"/>
</dbReference>
<dbReference type="GO" id="GO:0004818">
    <property type="term" value="F:glutamate-tRNA ligase activity"/>
    <property type="evidence" value="ECO:0007669"/>
    <property type="project" value="UniProtKB-UniRule"/>
</dbReference>
<dbReference type="GO" id="GO:0000049">
    <property type="term" value="F:tRNA binding"/>
    <property type="evidence" value="ECO:0007669"/>
    <property type="project" value="InterPro"/>
</dbReference>
<dbReference type="GO" id="GO:0008270">
    <property type="term" value="F:zinc ion binding"/>
    <property type="evidence" value="ECO:0007669"/>
    <property type="project" value="InterPro"/>
</dbReference>
<dbReference type="GO" id="GO:0006424">
    <property type="term" value="P:glutamyl-tRNA aminoacylation"/>
    <property type="evidence" value="ECO:0007669"/>
    <property type="project" value="UniProtKB-UniRule"/>
</dbReference>
<dbReference type="CDD" id="cd00808">
    <property type="entry name" value="GluRS_core"/>
    <property type="match status" value="1"/>
</dbReference>
<dbReference type="FunFam" id="3.40.50.620:FF:000007">
    <property type="entry name" value="Glutamate--tRNA ligase"/>
    <property type="match status" value="1"/>
</dbReference>
<dbReference type="Gene3D" id="1.10.10.350">
    <property type="match status" value="1"/>
</dbReference>
<dbReference type="Gene3D" id="3.40.50.620">
    <property type="entry name" value="HUPs"/>
    <property type="match status" value="1"/>
</dbReference>
<dbReference type="HAMAP" id="MF_00022">
    <property type="entry name" value="Glu_tRNA_synth_type1"/>
    <property type="match status" value="1"/>
</dbReference>
<dbReference type="InterPro" id="IPR045462">
    <property type="entry name" value="aa-tRNA-synth_I_cd-bd"/>
</dbReference>
<dbReference type="InterPro" id="IPR020751">
    <property type="entry name" value="aa-tRNA-synth_I_codon-bd_sub2"/>
</dbReference>
<dbReference type="InterPro" id="IPR001412">
    <property type="entry name" value="aa-tRNA-synth_I_CS"/>
</dbReference>
<dbReference type="InterPro" id="IPR008925">
    <property type="entry name" value="aa_tRNA-synth_I_cd-bd_sf"/>
</dbReference>
<dbReference type="InterPro" id="IPR004527">
    <property type="entry name" value="Glu-tRNA-ligase_bac/mito"/>
</dbReference>
<dbReference type="InterPro" id="IPR000924">
    <property type="entry name" value="Glu/Gln-tRNA-synth"/>
</dbReference>
<dbReference type="InterPro" id="IPR020058">
    <property type="entry name" value="Glu/Gln-tRNA-synth_Ib_cat-dom"/>
</dbReference>
<dbReference type="InterPro" id="IPR049940">
    <property type="entry name" value="GluQ/Sye"/>
</dbReference>
<dbReference type="InterPro" id="IPR033910">
    <property type="entry name" value="GluRS_core"/>
</dbReference>
<dbReference type="InterPro" id="IPR014729">
    <property type="entry name" value="Rossmann-like_a/b/a_fold"/>
</dbReference>
<dbReference type="NCBIfam" id="TIGR00464">
    <property type="entry name" value="gltX_bact"/>
    <property type="match status" value="1"/>
</dbReference>
<dbReference type="PANTHER" id="PTHR43311">
    <property type="entry name" value="GLUTAMATE--TRNA LIGASE"/>
    <property type="match status" value="1"/>
</dbReference>
<dbReference type="PANTHER" id="PTHR43311:SF2">
    <property type="entry name" value="GLUTAMATE--TRNA LIGASE, MITOCHONDRIAL-RELATED"/>
    <property type="match status" value="1"/>
</dbReference>
<dbReference type="Pfam" id="PF19269">
    <property type="entry name" value="Anticodon_2"/>
    <property type="match status" value="1"/>
</dbReference>
<dbReference type="Pfam" id="PF00749">
    <property type="entry name" value="tRNA-synt_1c"/>
    <property type="match status" value="1"/>
</dbReference>
<dbReference type="PRINTS" id="PR00987">
    <property type="entry name" value="TRNASYNTHGLU"/>
</dbReference>
<dbReference type="SUPFAM" id="SSF48163">
    <property type="entry name" value="An anticodon-binding domain of class I aminoacyl-tRNA synthetases"/>
    <property type="match status" value="1"/>
</dbReference>
<dbReference type="SUPFAM" id="SSF52374">
    <property type="entry name" value="Nucleotidylyl transferase"/>
    <property type="match status" value="1"/>
</dbReference>
<dbReference type="PROSITE" id="PS00178">
    <property type="entry name" value="AA_TRNA_LIGASE_I"/>
    <property type="match status" value="1"/>
</dbReference>
<sequence>MTVKTRFAPSPTGFLHVGGARTALYSWLFAKHMGGEFVLRIEDTDLERSTQEAIDAILEGMEWLGMDWDEGPYYQTKRFDRYNQLVDQLLAEDKAYKCYCPKALLDELREEQMAAGVKPRYDANHPKIVAANAAATEDSAFCIRFRNPKEGTVVFEDKVRGRIEIANSELDDLIIRRTDGSPTYNFCVVIDDWDMGITQVVRGEDHINNTPRQINIYKAIGAPVPEFAHCAMILGDDGAKLSKRHGAVSVMQYRDEGYLPQALLNYLIRLGWSHGDQEIFSMEEMINLFSLESISKSASAFNTDKLLWLNNHYIKTAEPEYVAKYLQWHLEQKEIDTANGPKITDVIGLVGERCNTLIELADQSRYFYQDFSEFEAGAAKKHLRPVAKDALALVLSKVEALEEWNTENLHVVIADTCTELEVGMGKVGMPLRVAVTGQGQSPSVDATMMLIGKERVVNRITMALAFIAEREANA</sequence>
<feature type="chain" id="PRO_0000119621" description="Glutamate--tRNA ligase">
    <location>
        <begin position="1"/>
        <end position="474"/>
    </location>
</feature>
<feature type="short sequence motif" description="'HIGH' region" evidence="1">
    <location>
        <begin position="9"/>
        <end position="19"/>
    </location>
</feature>
<feature type="short sequence motif" description="'KMSKS' region" evidence="1">
    <location>
        <begin position="240"/>
        <end position="244"/>
    </location>
</feature>
<feature type="binding site" evidence="1">
    <location>
        <position position="243"/>
    </location>
    <ligand>
        <name>ATP</name>
        <dbReference type="ChEBI" id="CHEBI:30616"/>
    </ligand>
</feature>
<accession>Q6LTT8</accession>
<protein>
    <recommendedName>
        <fullName evidence="1">Glutamate--tRNA ligase</fullName>
        <ecNumber evidence="1">6.1.1.17</ecNumber>
    </recommendedName>
    <alternativeName>
        <fullName evidence="1">Glutamyl-tRNA synthetase</fullName>
        <shortName evidence="1">GluRS</shortName>
    </alternativeName>
</protein>
<organism>
    <name type="scientific">Photobacterium profundum (strain SS9)</name>
    <dbReference type="NCBI Taxonomy" id="298386"/>
    <lineage>
        <taxon>Bacteria</taxon>
        <taxon>Pseudomonadati</taxon>
        <taxon>Pseudomonadota</taxon>
        <taxon>Gammaproteobacteria</taxon>
        <taxon>Vibrionales</taxon>
        <taxon>Vibrionaceae</taxon>
        <taxon>Photobacterium</taxon>
    </lineage>
</organism>
<name>SYE_PHOPR</name>
<reference key="1">
    <citation type="journal article" date="2005" name="Science">
        <title>Life at depth: Photobacterium profundum genome sequence and expression analysis.</title>
        <authorList>
            <person name="Vezzi A."/>
            <person name="Campanaro S."/>
            <person name="D'Angelo M."/>
            <person name="Simonato F."/>
            <person name="Vitulo N."/>
            <person name="Lauro F.M."/>
            <person name="Cestaro A."/>
            <person name="Malacrida G."/>
            <person name="Simionati B."/>
            <person name="Cannata N."/>
            <person name="Romualdi C."/>
            <person name="Bartlett D.H."/>
            <person name="Valle G."/>
        </authorList>
    </citation>
    <scope>NUCLEOTIDE SEQUENCE [LARGE SCALE GENOMIC DNA]</scope>
    <source>
        <strain>ATCC BAA-1253 / SS9</strain>
    </source>
</reference>
<evidence type="ECO:0000255" key="1">
    <source>
        <dbReference type="HAMAP-Rule" id="MF_00022"/>
    </source>
</evidence>
<comment type="function">
    <text evidence="1">Catalyzes the attachment of glutamate to tRNA(Glu) in a two-step reaction: glutamate is first activated by ATP to form Glu-AMP and then transferred to the acceptor end of tRNA(Glu).</text>
</comment>
<comment type="catalytic activity">
    <reaction evidence="1">
        <text>tRNA(Glu) + L-glutamate + ATP = L-glutamyl-tRNA(Glu) + AMP + diphosphate</text>
        <dbReference type="Rhea" id="RHEA:23540"/>
        <dbReference type="Rhea" id="RHEA-COMP:9663"/>
        <dbReference type="Rhea" id="RHEA-COMP:9680"/>
        <dbReference type="ChEBI" id="CHEBI:29985"/>
        <dbReference type="ChEBI" id="CHEBI:30616"/>
        <dbReference type="ChEBI" id="CHEBI:33019"/>
        <dbReference type="ChEBI" id="CHEBI:78442"/>
        <dbReference type="ChEBI" id="CHEBI:78520"/>
        <dbReference type="ChEBI" id="CHEBI:456215"/>
        <dbReference type="EC" id="6.1.1.17"/>
    </reaction>
</comment>
<comment type="subunit">
    <text evidence="1">Monomer.</text>
</comment>
<comment type="subcellular location">
    <subcellularLocation>
        <location evidence="1">Cytoplasm</location>
    </subcellularLocation>
</comment>
<comment type="similarity">
    <text evidence="1">Belongs to the class-I aminoacyl-tRNA synthetase family. Glutamate--tRNA ligase type 1 subfamily.</text>
</comment>
<proteinExistence type="inferred from homology"/>